<feature type="signal peptide" evidence="1">
    <location>
        <begin position="1"/>
        <end position="20"/>
    </location>
</feature>
<feature type="chain" id="PRO_0000390492" description="Abnormal pharyngeal pumping eat-20" evidence="1">
    <location>
        <begin position="21"/>
        <end position="810"/>
    </location>
</feature>
<feature type="topological domain" description="Extracellular" evidence="1">
    <location>
        <begin position="21"/>
        <end position="748"/>
    </location>
</feature>
<feature type="transmembrane region" description="Helical" evidence="1">
    <location>
        <begin position="749"/>
        <end position="769"/>
    </location>
</feature>
<feature type="topological domain" description="Cytoplasmic" evidence="1">
    <location>
        <begin position="770"/>
        <end position="810"/>
    </location>
</feature>
<feature type="domain" description="EGF-like 1" evidence="2">
    <location>
        <begin position="220"/>
        <end position="257"/>
    </location>
</feature>
<feature type="domain" description="EGF-like 2" evidence="2">
    <location>
        <begin position="258"/>
        <end position="293"/>
    </location>
</feature>
<feature type="domain" description="EGF-like 3" evidence="2">
    <location>
        <begin position="301"/>
        <end position="335"/>
    </location>
</feature>
<feature type="region of interest" description="Disordered" evidence="3">
    <location>
        <begin position="522"/>
        <end position="567"/>
    </location>
</feature>
<feature type="region of interest" description="Disordered" evidence="3">
    <location>
        <begin position="684"/>
        <end position="738"/>
    </location>
</feature>
<feature type="compositionally biased region" description="Low complexity" evidence="3">
    <location>
        <begin position="522"/>
        <end position="531"/>
    </location>
</feature>
<feature type="compositionally biased region" description="Acidic residues" evidence="3">
    <location>
        <begin position="542"/>
        <end position="558"/>
    </location>
</feature>
<feature type="glycosylation site" description="N-linked (GlcNAc...) asparagine" evidence="1">
    <location>
        <position position="90"/>
    </location>
</feature>
<feature type="glycosylation site" description="N-linked (GlcNAc...) asparagine" evidence="1">
    <location>
        <position position="171"/>
    </location>
</feature>
<feature type="glycosylation site" description="N-linked (GlcNAc...) asparagine" evidence="1">
    <location>
        <position position="232"/>
    </location>
</feature>
<feature type="glycosylation site" description="N-linked (GlcNAc...) asparagine" evidence="1">
    <location>
        <position position="371"/>
    </location>
</feature>
<feature type="disulfide bond" evidence="2">
    <location>
        <begin position="224"/>
        <end position="235"/>
    </location>
</feature>
<feature type="disulfide bond" evidence="2">
    <location>
        <begin position="229"/>
        <end position="245"/>
    </location>
</feature>
<feature type="disulfide bond" evidence="2">
    <location>
        <begin position="247"/>
        <end position="256"/>
    </location>
</feature>
<feature type="disulfide bond" evidence="2">
    <location>
        <begin position="261"/>
        <end position="272"/>
    </location>
</feature>
<feature type="disulfide bond" evidence="2">
    <location>
        <begin position="266"/>
        <end position="281"/>
    </location>
</feature>
<feature type="disulfide bond" evidence="2">
    <location>
        <begin position="283"/>
        <end position="292"/>
    </location>
</feature>
<feature type="disulfide bond" evidence="2">
    <location>
        <begin position="305"/>
        <end position="314"/>
    </location>
</feature>
<feature type="disulfide bond" evidence="2">
    <location>
        <begin position="309"/>
        <end position="323"/>
    </location>
</feature>
<feature type="disulfide bond" evidence="2">
    <location>
        <begin position="325"/>
        <end position="334"/>
    </location>
</feature>
<feature type="splice variant" id="VSP_053168" description="In isoform a." evidence="6">
    <location>
        <begin position="711"/>
        <end position="712"/>
    </location>
</feature>
<protein>
    <recommendedName>
        <fullName evidence="6">Abnormal pharyngeal pumping eat-20</fullName>
    </recommendedName>
</protein>
<keyword id="KW-0025">Alternative splicing</keyword>
<keyword id="KW-1015">Disulfide bond</keyword>
<keyword id="KW-0245">EGF-like domain</keyword>
<keyword id="KW-0325">Glycoprotein</keyword>
<keyword id="KW-0472">Membrane</keyword>
<keyword id="KW-1185">Reference proteome</keyword>
<keyword id="KW-0677">Repeat</keyword>
<keyword id="KW-0732">Signal</keyword>
<keyword id="KW-0812">Transmembrane</keyword>
<keyword id="KW-1133">Transmembrane helix</keyword>
<reference evidence="7 8" key="1">
    <citation type="journal article" date="2000" name="Genetics">
        <title>EAT-20, a novel transmembrane protein with EGF motifs, is required for efficient feeding in Caenorhabditis elegans.</title>
        <authorList>
            <person name="Shibata Y."/>
            <person name="Fujii T."/>
            <person name="Dent J.A."/>
            <person name="Fujisawa H."/>
            <person name="Takagi S."/>
        </authorList>
    </citation>
    <scope>NUCLEOTIDE SEQUENCE [MRNA] (ISOFORMS A AND B)</scope>
    <scope>FUNCTION</scope>
    <scope>TISSUE SPECIFICITY</scope>
    <scope>DISRUPTION PHENOTYPE</scope>
    <source>
        <strain evidence="4">Bristol N2</strain>
    </source>
</reference>
<reference evidence="7 9" key="2">
    <citation type="journal article" date="1998" name="Science">
        <title>Genome sequence of the nematode C. elegans: a platform for investigating biology.</title>
        <authorList>
            <consortium name="The C. elegans sequencing consortium"/>
        </authorList>
    </citation>
    <scope>NUCLEOTIDE SEQUENCE [LARGE SCALE GENOMIC DNA]</scope>
    <scope>ALTERNATIVE SPLICING</scope>
    <source>
        <strain>Bristol N2</strain>
    </source>
</reference>
<gene>
    <name type="primary">eat-20</name>
    <name type="ORF">H30A04.1</name>
</gene>
<dbReference type="EMBL" id="AB032748">
    <property type="protein sequence ID" value="BAA92157.1"/>
    <property type="molecule type" value="mRNA"/>
</dbReference>
<dbReference type="EMBL" id="AB032749">
    <property type="protein sequence ID" value="BAA92158.1"/>
    <property type="molecule type" value="mRNA"/>
</dbReference>
<dbReference type="EMBL" id="AL008869">
    <property type="protein sequence ID" value="CAA15516.1"/>
    <property type="molecule type" value="Genomic_DNA"/>
</dbReference>
<dbReference type="EMBL" id="AL008869">
    <property type="protein sequence ID" value="CAC42315.1"/>
    <property type="molecule type" value="Genomic_DNA"/>
</dbReference>
<dbReference type="PIR" id="T23129">
    <property type="entry name" value="T23129"/>
</dbReference>
<dbReference type="RefSeq" id="NP_001024740.1">
    <property type="nucleotide sequence ID" value="NM_001029569.2"/>
</dbReference>
<dbReference type="RefSeq" id="NP_001024741.1">
    <molecule id="Q9NL29-1"/>
    <property type="nucleotide sequence ID" value="NM_001029570.6"/>
</dbReference>
<dbReference type="RefSeq" id="NP_001369791.1">
    <molecule id="Q9NL29-2"/>
    <property type="nucleotide sequence ID" value="NM_001383685.2"/>
</dbReference>
<dbReference type="BioGRID" id="46535">
    <property type="interactions" value="4"/>
</dbReference>
<dbReference type="FunCoup" id="Q9NL29">
    <property type="interactions" value="140"/>
</dbReference>
<dbReference type="IntAct" id="Q9NL29">
    <property type="interactions" value="4"/>
</dbReference>
<dbReference type="STRING" id="6239.H30A04.1b.1"/>
<dbReference type="GlyCosmos" id="Q9NL29">
    <property type="glycosylation" value="4 sites, No reported glycans"/>
</dbReference>
<dbReference type="PaxDb" id="6239-H30A04.1b"/>
<dbReference type="PeptideAtlas" id="Q9NL29"/>
<dbReference type="EnsemblMetazoa" id="H30A04.1a.1">
    <molecule id="Q9NL29-2"/>
    <property type="protein sequence ID" value="H30A04.1a.1"/>
    <property type="gene ID" value="WBGene00001148"/>
</dbReference>
<dbReference type="EnsemblMetazoa" id="H30A04.1a.2">
    <molecule id="Q9NL29-2"/>
    <property type="protein sequence ID" value="H30A04.1a.2"/>
    <property type="gene ID" value="WBGene00001148"/>
</dbReference>
<dbReference type="EnsemblMetazoa" id="H30A04.1b.1">
    <molecule id="Q9NL29-1"/>
    <property type="protein sequence ID" value="H30A04.1b.1"/>
    <property type="gene ID" value="WBGene00001148"/>
</dbReference>
<dbReference type="GeneID" id="181641"/>
<dbReference type="KEGG" id="cel:CELE_H30A04.1"/>
<dbReference type="UCSC" id="H30A04.1b.2">
    <property type="organism name" value="c. elegans"/>
</dbReference>
<dbReference type="AGR" id="WB:WBGene00001148"/>
<dbReference type="CTD" id="181641"/>
<dbReference type="WormBase" id="H30A04.1a">
    <molecule id="Q9NL29-2"/>
    <property type="protein sequence ID" value="CE18828"/>
    <property type="gene ID" value="WBGene00001148"/>
    <property type="gene designation" value="eat-20"/>
</dbReference>
<dbReference type="WormBase" id="H30A04.1b">
    <molecule id="Q9NL29-1"/>
    <property type="protein sequence ID" value="CE27767"/>
    <property type="gene ID" value="WBGene00001148"/>
    <property type="gene designation" value="eat-20"/>
</dbReference>
<dbReference type="eggNOG" id="KOG1217">
    <property type="taxonomic scope" value="Eukaryota"/>
</dbReference>
<dbReference type="HOGENOM" id="CLU_311306_0_0_1"/>
<dbReference type="InParanoid" id="Q9NL29"/>
<dbReference type="OMA" id="MPMSHIA"/>
<dbReference type="OrthoDB" id="283575at2759"/>
<dbReference type="PRO" id="PR:Q9NL29"/>
<dbReference type="Proteomes" id="UP000001940">
    <property type="component" value="Chromosome X"/>
</dbReference>
<dbReference type="Bgee" id="WBGene00001148">
    <property type="expression patterns" value="Expressed in pharyngeal muscle cell (C elegans) and 3 other cell types or tissues"/>
</dbReference>
<dbReference type="GO" id="GO:0030424">
    <property type="term" value="C:axon"/>
    <property type="evidence" value="ECO:0000314"/>
    <property type="project" value="WormBase"/>
</dbReference>
<dbReference type="GO" id="GO:0009986">
    <property type="term" value="C:cell surface"/>
    <property type="evidence" value="ECO:0000314"/>
    <property type="project" value="WormBase"/>
</dbReference>
<dbReference type="GO" id="GO:0016020">
    <property type="term" value="C:membrane"/>
    <property type="evidence" value="ECO:0007669"/>
    <property type="project" value="UniProtKB-SubCell"/>
</dbReference>
<dbReference type="GO" id="GO:0005509">
    <property type="term" value="F:calcium ion binding"/>
    <property type="evidence" value="ECO:0007669"/>
    <property type="project" value="InterPro"/>
</dbReference>
<dbReference type="GO" id="GO:0005112">
    <property type="term" value="F:Notch binding"/>
    <property type="evidence" value="ECO:0000318"/>
    <property type="project" value="GO_Central"/>
</dbReference>
<dbReference type="CDD" id="cd00054">
    <property type="entry name" value="EGF_CA"/>
    <property type="match status" value="2"/>
</dbReference>
<dbReference type="FunFam" id="2.10.25.10:FF:000173">
    <property type="entry name" value="Neurogenic locus notch protein 2"/>
    <property type="match status" value="1"/>
</dbReference>
<dbReference type="Gene3D" id="2.10.25.10">
    <property type="entry name" value="Laminin"/>
    <property type="match status" value="3"/>
</dbReference>
<dbReference type="InterPro" id="IPR001881">
    <property type="entry name" value="EGF-like_Ca-bd_dom"/>
</dbReference>
<dbReference type="InterPro" id="IPR000742">
    <property type="entry name" value="EGF-like_dom"/>
</dbReference>
<dbReference type="InterPro" id="IPR003645">
    <property type="entry name" value="Fol_N"/>
</dbReference>
<dbReference type="InterPro" id="IPR051022">
    <property type="entry name" value="Notch_Cell-Fate_Det"/>
</dbReference>
<dbReference type="PANTHER" id="PTHR24049">
    <property type="entry name" value="CRUMBS FAMILY MEMBER"/>
    <property type="match status" value="1"/>
</dbReference>
<dbReference type="PANTHER" id="PTHR24049:SF22">
    <property type="entry name" value="DROSOPHILA CRUMBS HOMOLOG"/>
    <property type="match status" value="1"/>
</dbReference>
<dbReference type="Pfam" id="PF00008">
    <property type="entry name" value="EGF"/>
    <property type="match status" value="1"/>
</dbReference>
<dbReference type="SMART" id="SM00181">
    <property type="entry name" value="EGF"/>
    <property type="match status" value="4"/>
</dbReference>
<dbReference type="SMART" id="SM00179">
    <property type="entry name" value="EGF_CA"/>
    <property type="match status" value="3"/>
</dbReference>
<dbReference type="SMART" id="SM00274">
    <property type="entry name" value="FOLN"/>
    <property type="match status" value="2"/>
</dbReference>
<dbReference type="SUPFAM" id="SSF57196">
    <property type="entry name" value="EGF/Laminin"/>
    <property type="match status" value="2"/>
</dbReference>
<dbReference type="PROSITE" id="PS00022">
    <property type="entry name" value="EGF_1"/>
    <property type="match status" value="3"/>
</dbReference>
<dbReference type="PROSITE" id="PS01186">
    <property type="entry name" value="EGF_2"/>
    <property type="match status" value="2"/>
</dbReference>
<dbReference type="PROSITE" id="PS50026">
    <property type="entry name" value="EGF_3"/>
    <property type="match status" value="3"/>
</dbReference>
<name>EAT20_CAEEL</name>
<accession>Q9NL29</accession>
<accession>Q9XXU1</accession>
<organism>
    <name type="scientific">Caenorhabditis elegans</name>
    <dbReference type="NCBI Taxonomy" id="6239"/>
    <lineage>
        <taxon>Eukaryota</taxon>
        <taxon>Metazoa</taxon>
        <taxon>Ecdysozoa</taxon>
        <taxon>Nematoda</taxon>
        <taxon>Chromadorea</taxon>
        <taxon>Rhabditida</taxon>
        <taxon>Rhabditina</taxon>
        <taxon>Rhabditomorpha</taxon>
        <taxon>Rhabditoidea</taxon>
        <taxon>Rhabditidae</taxon>
        <taxon>Peloderinae</taxon>
        <taxon>Caenorhabditis</taxon>
    </lineage>
</organism>
<comment type="function">
    <text evidence="4">Regulates pharyngeal pumping during feeding.</text>
</comment>
<comment type="subcellular location">
    <subcellularLocation>
        <location evidence="1">Membrane</location>
        <topology evidence="1">Single-pass type I membrane protein</topology>
    </subcellularLocation>
</comment>
<comment type="alternative products">
    <event type="alternative splicing"/>
    <isoform>
        <id>Q9NL29-1</id>
        <name evidence="5">b</name>
        <name evidence="4">B</name>
        <sequence type="displayed"/>
    </isoform>
    <isoform>
        <id>Q9NL29-2</id>
        <name evidence="5">a</name>
        <name evidence="4">A</name>
        <sequence type="described" ref="VSP_053168"/>
    </isoform>
</comment>
<comment type="tissue specificity">
    <text evidence="4">Highly expressed in the pharynx, circumpharyngeal cells, pharyngeal-intestinal valve and a subset of neurons in larval and embryonic stages. Also moderately expressed in the lining of the intestine, coelomocytes, labial process bundles and some hypodermal cells. In adults, it is predominantly expressed in the pharynx, the pharyngeal-intenstinal valve, some circumpharyngeal cells, m3, m4 and m6 pharyngeal muscles, and IL1, OLQ, BAG and ALN neurons. Weaker expression is observed in labial process bundles, coelomocytes, the ventral hypodermal ridge, the vulval hypodermis and the sensory rays of the adult male tail.</text>
</comment>
<comment type="disruption phenotype">
    <text evidence="4">Worms display a reduction in pharyngeal pumping rates, body length and intestine size, as well as a prolonged egg laying period and smaller brood size.</text>
</comment>
<proteinExistence type="evidence at transcript level"/>
<evidence type="ECO:0000255" key="1"/>
<evidence type="ECO:0000255" key="2">
    <source>
        <dbReference type="PROSITE-ProRule" id="PRU00076"/>
    </source>
</evidence>
<evidence type="ECO:0000256" key="3">
    <source>
        <dbReference type="SAM" id="MobiDB-lite"/>
    </source>
</evidence>
<evidence type="ECO:0000269" key="4">
    <source>
    </source>
</evidence>
<evidence type="ECO:0000269" key="5">
    <source>
    </source>
</evidence>
<evidence type="ECO:0000303" key="6">
    <source>
    </source>
</evidence>
<evidence type="ECO:0000305" key="7"/>
<evidence type="ECO:0000312" key="8">
    <source>
        <dbReference type="EMBL" id="BAA92158.1"/>
    </source>
</evidence>
<evidence type="ECO:0000312" key="9">
    <source>
        <dbReference type="EMBL" id="CAC42315.1"/>
    </source>
</evidence>
<sequence length="810" mass="87953">MTTFCRVLLIFGIYVAVCCAQSVEDDVFHFTNPSQGNAVWILDESSLPWTGGYQFLRSISGMPTTLLSVVDSSTGVTLGQCVAPQDATGNFSKRWERFSWELTASGLDCTFEHGAAIRVEFDRTQNPRTFSIRIQSITGPACLRDVVVQTEQATGCPPHLSRNSFTANALNCSCPFLDAANEDSEIENEDVDMLANTPQFPLFKGIDPSVLGSANPPTLPPSPCANHECHNNGTCLVSQEGAATCLCRNGFTGDRCELDVCSSVPCQNGGVCRSNNGIAYCECPPAFTGLLCESAHTDESVAPICRPECSNGQCVFKDGQAQCECRQGFTGANCNVLDVCLGDAACSMFGPLAKCVLDDNMDKMSSLTLINGTYDCLCPHPIHGQFVDCMQLHAPSATSVQPTEQVVINNVTPSFPVLEISKLPTGAPVTFTATSTTLMVTQPTVTVSPTHQVPSEPFVGFTVTRAPLRPLDIGSTTLPPPFNQHIITAGEPTWSSQQPHQPSEVPTQTTFIFPQTPETTTFAPTTGTQQPVHKFVSPSVPDENEEEEEEETTEETEETFPTPSTMQVATNGQFTTETAFVTSTIPSTTTDMEETDEDEDMTEEVTDSSTQPSTTVFVQPTTTFTTEAPTTTMEEEEEMTTDQVEDIESEEIATTTTQTSLPFWMTTTNKQVVPDSPTPMVIMPHPQPDEKMETSTEGVVDEESDEERTTVPESNEEVVTKNAEATTPSDITHHHTSSGKQSSAAASWIIAIIALIVLGLLLLATSLFILRYIRQSRKLHGKYNPAREEHNLSAAYAMPMSHIAKEERLI</sequence>